<accession>P68231</accession>
<accession>P02069</accession>
<protein>
    <recommendedName>
        <fullName>Hemoglobin subunit beta</fullName>
    </recommendedName>
    <alternativeName>
        <fullName>Beta-globin</fullName>
    </alternativeName>
    <alternativeName>
        <fullName>Hemoglobin beta chain</fullName>
    </alternativeName>
</protein>
<keyword id="KW-0002">3D-structure</keyword>
<keyword id="KW-0007">Acetylation</keyword>
<keyword id="KW-0903">Direct protein sequencing</keyword>
<keyword id="KW-0349">Heme</keyword>
<keyword id="KW-0408">Iron</keyword>
<keyword id="KW-0479">Metal-binding</keyword>
<keyword id="KW-0561">Oxygen transport</keyword>
<keyword id="KW-0597">Phosphoprotein</keyword>
<keyword id="KW-0702">S-nitrosylation</keyword>
<keyword id="KW-0813">Transport</keyword>
<sequence length="147" mass="16246">MVHLSGDEKNAVHGLWSKVKVDEVGGEALGRLLVVYPWTRRFFESFGDLSTADAVMNNPKVKAHGSKVLNSFGDGLNHLDNLKGTYAKLSELHCDKLHVDPENFRLLGNVLVVVLARHFGKEFTPDLQAAYQKVVAGVANALAHRYH</sequence>
<feature type="initiator methionine" description="Removed" evidence="1 2">
    <location>
        <position position="1"/>
    </location>
</feature>
<feature type="chain" id="PRO_0000052906" description="Hemoglobin subunit beta">
    <location>
        <begin position="2"/>
        <end position="147"/>
    </location>
</feature>
<feature type="domain" description="Globin" evidence="4">
    <location>
        <begin position="3"/>
        <end position="147"/>
    </location>
</feature>
<feature type="binding site" description="distal binding residue">
    <location>
        <position position="64"/>
    </location>
    <ligand>
        <name>heme b</name>
        <dbReference type="ChEBI" id="CHEBI:60344"/>
    </ligand>
    <ligandPart>
        <name>Fe</name>
        <dbReference type="ChEBI" id="CHEBI:18248"/>
    </ligandPart>
</feature>
<feature type="binding site" description="proximal binding residue">
    <location>
        <position position="93"/>
    </location>
    <ligand>
        <name>heme b</name>
        <dbReference type="ChEBI" id="CHEBI:60344"/>
    </ligand>
    <ligandPart>
        <name>Fe</name>
        <dbReference type="ChEBI" id="CHEBI:18248"/>
    </ligandPart>
</feature>
<feature type="modified residue" description="N-acetylvaline" evidence="1">
    <location>
        <position position="2"/>
    </location>
</feature>
<feature type="modified residue" description="Phosphoserine" evidence="3">
    <location>
        <position position="45"/>
    </location>
</feature>
<feature type="modified residue" description="N6-acetyllysine" evidence="3">
    <location>
        <position position="60"/>
    </location>
</feature>
<feature type="modified residue" description="N6-acetyllysine" evidence="3">
    <location>
        <position position="83"/>
    </location>
</feature>
<feature type="modified residue" description="S-nitrosocysteine" evidence="3">
    <location>
        <position position="94"/>
    </location>
</feature>
<feature type="helix" evidence="5">
    <location>
        <begin position="6"/>
        <end position="16"/>
    </location>
</feature>
<feature type="helix" evidence="5">
    <location>
        <begin position="21"/>
        <end position="35"/>
    </location>
</feature>
<feature type="helix" evidence="5">
    <location>
        <begin position="37"/>
        <end position="46"/>
    </location>
</feature>
<feature type="helix" evidence="5">
    <location>
        <begin position="52"/>
        <end position="56"/>
    </location>
</feature>
<feature type="helix" evidence="5">
    <location>
        <begin position="59"/>
        <end position="76"/>
    </location>
</feature>
<feature type="turn" evidence="5">
    <location>
        <begin position="77"/>
        <end position="80"/>
    </location>
</feature>
<feature type="helix" evidence="5">
    <location>
        <begin position="82"/>
        <end position="85"/>
    </location>
</feature>
<feature type="helix" evidence="5">
    <location>
        <begin position="87"/>
        <end position="94"/>
    </location>
</feature>
<feature type="helix" evidence="5">
    <location>
        <begin position="102"/>
        <end position="119"/>
    </location>
</feature>
<feature type="helix" evidence="5">
    <location>
        <begin position="120"/>
        <end position="122"/>
    </location>
</feature>
<feature type="helix" evidence="5">
    <location>
        <begin position="125"/>
        <end position="142"/>
    </location>
</feature>
<feature type="turn" evidence="5">
    <location>
        <begin position="143"/>
        <end position="146"/>
    </location>
</feature>
<dbReference type="PIR" id="A91685">
    <property type="entry name" value="HBCMA"/>
</dbReference>
<dbReference type="PDB" id="3GDJ">
    <property type="method" value="X-ray"/>
    <property type="resolution" value="2.00 A"/>
    <property type="chains" value="B/D=2-147"/>
</dbReference>
<dbReference type="PDBsum" id="3GDJ"/>
<dbReference type="SMR" id="P68231"/>
<dbReference type="STRING" id="9838.ENSCDRP00005001120"/>
<dbReference type="GeneID" id="105097953"/>
<dbReference type="KEGG" id="cdk:105097953"/>
<dbReference type="OrthoDB" id="9886081at2759"/>
<dbReference type="EvolutionaryTrace" id="P68231"/>
<dbReference type="GO" id="GO:0072562">
    <property type="term" value="C:blood microparticle"/>
    <property type="evidence" value="ECO:0007669"/>
    <property type="project" value="TreeGrafter"/>
</dbReference>
<dbReference type="GO" id="GO:0031838">
    <property type="term" value="C:haptoglobin-hemoglobin complex"/>
    <property type="evidence" value="ECO:0007669"/>
    <property type="project" value="TreeGrafter"/>
</dbReference>
<dbReference type="GO" id="GO:0005833">
    <property type="term" value="C:hemoglobin complex"/>
    <property type="evidence" value="ECO:0007669"/>
    <property type="project" value="InterPro"/>
</dbReference>
<dbReference type="GO" id="GO:0031720">
    <property type="term" value="F:haptoglobin binding"/>
    <property type="evidence" value="ECO:0007669"/>
    <property type="project" value="TreeGrafter"/>
</dbReference>
<dbReference type="GO" id="GO:0020037">
    <property type="term" value="F:heme binding"/>
    <property type="evidence" value="ECO:0007669"/>
    <property type="project" value="InterPro"/>
</dbReference>
<dbReference type="GO" id="GO:0031721">
    <property type="term" value="F:hemoglobin alpha binding"/>
    <property type="evidence" value="ECO:0007669"/>
    <property type="project" value="TreeGrafter"/>
</dbReference>
<dbReference type="GO" id="GO:0046872">
    <property type="term" value="F:metal ion binding"/>
    <property type="evidence" value="ECO:0007669"/>
    <property type="project" value="UniProtKB-KW"/>
</dbReference>
<dbReference type="GO" id="GO:0043177">
    <property type="term" value="F:organic acid binding"/>
    <property type="evidence" value="ECO:0007669"/>
    <property type="project" value="TreeGrafter"/>
</dbReference>
<dbReference type="GO" id="GO:0019825">
    <property type="term" value="F:oxygen binding"/>
    <property type="evidence" value="ECO:0007669"/>
    <property type="project" value="InterPro"/>
</dbReference>
<dbReference type="GO" id="GO:0005344">
    <property type="term" value="F:oxygen carrier activity"/>
    <property type="evidence" value="ECO:0007669"/>
    <property type="project" value="UniProtKB-KW"/>
</dbReference>
<dbReference type="GO" id="GO:0004601">
    <property type="term" value="F:peroxidase activity"/>
    <property type="evidence" value="ECO:0007669"/>
    <property type="project" value="TreeGrafter"/>
</dbReference>
<dbReference type="GO" id="GO:0042744">
    <property type="term" value="P:hydrogen peroxide catabolic process"/>
    <property type="evidence" value="ECO:0007669"/>
    <property type="project" value="TreeGrafter"/>
</dbReference>
<dbReference type="CDD" id="cd08925">
    <property type="entry name" value="Hb-beta-like"/>
    <property type="match status" value="1"/>
</dbReference>
<dbReference type="FunFam" id="1.10.490.10:FF:000001">
    <property type="entry name" value="Hemoglobin subunit beta"/>
    <property type="match status" value="1"/>
</dbReference>
<dbReference type="Gene3D" id="1.10.490.10">
    <property type="entry name" value="Globins"/>
    <property type="match status" value="1"/>
</dbReference>
<dbReference type="InterPro" id="IPR000971">
    <property type="entry name" value="Globin"/>
</dbReference>
<dbReference type="InterPro" id="IPR009050">
    <property type="entry name" value="Globin-like_sf"/>
</dbReference>
<dbReference type="InterPro" id="IPR012292">
    <property type="entry name" value="Globin/Proto"/>
</dbReference>
<dbReference type="InterPro" id="IPR002337">
    <property type="entry name" value="Hemoglobin_b"/>
</dbReference>
<dbReference type="InterPro" id="IPR050056">
    <property type="entry name" value="Hemoglobin_oxygen_transport"/>
</dbReference>
<dbReference type="PANTHER" id="PTHR11442">
    <property type="entry name" value="HEMOGLOBIN FAMILY MEMBER"/>
    <property type="match status" value="1"/>
</dbReference>
<dbReference type="PANTHER" id="PTHR11442:SF42">
    <property type="entry name" value="HEMOGLOBIN SUBUNIT BETA"/>
    <property type="match status" value="1"/>
</dbReference>
<dbReference type="Pfam" id="PF00042">
    <property type="entry name" value="Globin"/>
    <property type="match status" value="1"/>
</dbReference>
<dbReference type="PRINTS" id="PR00814">
    <property type="entry name" value="BETAHAEM"/>
</dbReference>
<dbReference type="SUPFAM" id="SSF46458">
    <property type="entry name" value="Globin-like"/>
    <property type="match status" value="1"/>
</dbReference>
<dbReference type="PROSITE" id="PS01033">
    <property type="entry name" value="GLOBIN"/>
    <property type="match status" value="1"/>
</dbReference>
<evidence type="ECO:0000250" key="1">
    <source>
        <dbReference type="UniProtKB" id="P02086"/>
    </source>
</evidence>
<evidence type="ECO:0000250" key="2">
    <source>
        <dbReference type="UniProtKB" id="P18983"/>
    </source>
</evidence>
<evidence type="ECO:0000250" key="3">
    <source>
        <dbReference type="UniProtKB" id="P68871"/>
    </source>
</evidence>
<evidence type="ECO:0000255" key="4">
    <source>
        <dbReference type="PROSITE-ProRule" id="PRU00238"/>
    </source>
</evidence>
<evidence type="ECO:0007829" key="5">
    <source>
        <dbReference type="PDB" id="3GDJ"/>
    </source>
</evidence>
<gene>
    <name type="primary">HBB</name>
</gene>
<reference key="1">
    <citation type="journal article" date="1979" name="Hoppe-Seyler's Z. Physiol. Chem.">
        <title>Respiration at high altitudes, phosphate-protein interaction: the sequence of hemoglobins from guinea pig and dromedary.</title>
        <authorList>
            <person name="Braunitzer G."/>
            <person name="Schrank B."/>
            <person name="Stangl A."/>
            <person name="Wiesner H."/>
        </authorList>
    </citation>
    <scope>PROTEIN SEQUENCE OF 2-147</scope>
</reference>
<organism>
    <name type="scientific">Camelus dromedarius</name>
    <name type="common">Dromedary</name>
    <name type="synonym">Arabian camel</name>
    <dbReference type="NCBI Taxonomy" id="9838"/>
    <lineage>
        <taxon>Eukaryota</taxon>
        <taxon>Metazoa</taxon>
        <taxon>Chordata</taxon>
        <taxon>Craniata</taxon>
        <taxon>Vertebrata</taxon>
        <taxon>Euteleostomi</taxon>
        <taxon>Mammalia</taxon>
        <taxon>Eutheria</taxon>
        <taxon>Laurasiatheria</taxon>
        <taxon>Artiodactyla</taxon>
        <taxon>Tylopoda</taxon>
        <taxon>Camelidae</taxon>
        <taxon>Camelus</taxon>
    </lineage>
</organism>
<name>HBB_CAMDR</name>
<comment type="function">
    <text>Involved in oxygen transport from the lung to the various peripheral tissues.</text>
</comment>
<comment type="subunit">
    <text>Heterotetramer of two alpha chains and two beta chains.</text>
</comment>
<comment type="tissue specificity">
    <text>Red blood cells.</text>
</comment>
<comment type="similarity">
    <text evidence="4">Belongs to the globin family.</text>
</comment>
<proteinExistence type="evidence at protein level"/>